<keyword id="KW-0472">Membrane</keyword>
<keyword id="KW-0597">Phosphoprotein</keyword>
<keyword id="KW-1185">Reference proteome</keyword>
<keyword id="KW-0812">Transmembrane</keyword>
<keyword id="KW-1133">Transmembrane helix</keyword>
<keyword id="KW-0813">Transport</keyword>
<reference key="1">
    <citation type="journal article" date="1995" name="Yeast">
        <title>The mae1 gene of Schizosaccharomyces pombe encodes a permease for malate and other C4 dicarboxylic acids.</title>
        <authorList>
            <person name="Grobler J."/>
            <person name="Bauer F."/>
            <person name="Subden R.E."/>
            <person name="van Vuuren H.J.J."/>
        </authorList>
    </citation>
    <scope>NUCLEOTIDE SEQUENCE [GENOMIC DNA]</scope>
</reference>
<reference key="2">
    <citation type="submission" date="2006-11" db="EMBL/GenBank/DDBJ databases">
        <title>Sequencing and analysis of malate degradation related enzyme gene from Schizosaccharomyces pombe.</title>
        <authorList>
            <person name="Li A."/>
            <person name="Su X."/>
        </authorList>
    </citation>
    <scope>NUCLEOTIDE SEQUENCE [GENOMIC DNA]</scope>
</reference>
<reference key="3">
    <citation type="journal article" date="2002" name="Nature">
        <title>The genome sequence of Schizosaccharomyces pombe.</title>
        <authorList>
            <person name="Wood V."/>
            <person name="Gwilliam R."/>
            <person name="Rajandream M.A."/>
            <person name="Lyne M.H."/>
            <person name="Lyne R."/>
            <person name="Stewart A."/>
            <person name="Sgouros J.G."/>
            <person name="Peat N."/>
            <person name="Hayles J."/>
            <person name="Baker S.G."/>
            <person name="Basham D."/>
            <person name="Bowman S."/>
            <person name="Brooks K."/>
            <person name="Brown D."/>
            <person name="Brown S."/>
            <person name="Chillingworth T."/>
            <person name="Churcher C.M."/>
            <person name="Collins M."/>
            <person name="Connor R."/>
            <person name="Cronin A."/>
            <person name="Davis P."/>
            <person name="Feltwell T."/>
            <person name="Fraser A."/>
            <person name="Gentles S."/>
            <person name="Goble A."/>
            <person name="Hamlin N."/>
            <person name="Harris D.E."/>
            <person name="Hidalgo J."/>
            <person name="Hodgson G."/>
            <person name="Holroyd S."/>
            <person name="Hornsby T."/>
            <person name="Howarth S."/>
            <person name="Huckle E.J."/>
            <person name="Hunt S."/>
            <person name="Jagels K."/>
            <person name="James K.D."/>
            <person name="Jones L."/>
            <person name="Jones M."/>
            <person name="Leather S."/>
            <person name="McDonald S."/>
            <person name="McLean J."/>
            <person name="Mooney P."/>
            <person name="Moule S."/>
            <person name="Mungall K.L."/>
            <person name="Murphy L.D."/>
            <person name="Niblett D."/>
            <person name="Odell C."/>
            <person name="Oliver K."/>
            <person name="O'Neil S."/>
            <person name="Pearson D."/>
            <person name="Quail M.A."/>
            <person name="Rabbinowitsch E."/>
            <person name="Rutherford K.M."/>
            <person name="Rutter S."/>
            <person name="Saunders D."/>
            <person name="Seeger K."/>
            <person name="Sharp S."/>
            <person name="Skelton J."/>
            <person name="Simmonds M.N."/>
            <person name="Squares R."/>
            <person name="Squares S."/>
            <person name="Stevens K."/>
            <person name="Taylor K."/>
            <person name="Taylor R.G."/>
            <person name="Tivey A."/>
            <person name="Walsh S.V."/>
            <person name="Warren T."/>
            <person name="Whitehead S."/>
            <person name="Woodward J.R."/>
            <person name="Volckaert G."/>
            <person name="Aert R."/>
            <person name="Robben J."/>
            <person name="Grymonprez B."/>
            <person name="Weltjens I."/>
            <person name="Vanstreels E."/>
            <person name="Rieger M."/>
            <person name="Schaefer M."/>
            <person name="Mueller-Auer S."/>
            <person name="Gabel C."/>
            <person name="Fuchs M."/>
            <person name="Duesterhoeft A."/>
            <person name="Fritzc C."/>
            <person name="Holzer E."/>
            <person name="Moestl D."/>
            <person name="Hilbert H."/>
            <person name="Borzym K."/>
            <person name="Langer I."/>
            <person name="Beck A."/>
            <person name="Lehrach H."/>
            <person name="Reinhardt R."/>
            <person name="Pohl T.M."/>
            <person name="Eger P."/>
            <person name="Zimmermann W."/>
            <person name="Wedler H."/>
            <person name="Wambutt R."/>
            <person name="Purnelle B."/>
            <person name="Goffeau A."/>
            <person name="Cadieu E."/>
            <person name="Dreano S."/>
            <person name="Gloux S."/>
            <person name="Lelaure V."/>
            <person name="Mottier S."/>
            <person name="Galibert F."/>
            <person name="Aves S.J."/>
            <person name="Xiang Z."/>
            <person name="Hunt C."/>
            <person name="Moore K."/>
            <person name="Hurst S.M."/>
            <person name="Lucas M."/>
            <person name="Rochet M."/>
            <person name="Gaillardin C."/>
            <person name="Tallada V.A."/>
            <person name="Garzon A."/>
            <person name="Thode G."/>
            <person name="Daga R.R."/>
            <person name="Cruzado L."/>
            <person name="Jimenez J."/>
            <person name="Sanchez M."/>
            <person name="del Rey F."/>
            <person name="Benito J."/>
            <person name="Dominguez A."/>
            <person name="Revuelta J.L."/>
            <person name="Moreno S."/>
            <person name="Armstrong J."/>
            <person name="Forsburg S.L."/>
            <person name="Cerutti L."/>
            <person name="Lowe T."/>
            <person name="McCombie W.R."/>
            <person name="Paulsen I."/>
            <person name="Potashkin J."/>
            <person name="Shpakovski G.V."/>
            <person name="Ussery D."/>
            <person name="Barrell B.G."/>
            <person name="Nurse P."/>
        </authorList>
    </citation>
    <scope>NUCLEOTIDE SEQUENCE [LARGE SCALE GENOMIC DNA]</scope>
    <source>
        <strain>972 / ATCC 24843</strain>
    </source>
</reference>
<reference key="4">
    <citation type="journal article" date="2008" name="J. Proteome Res.">
        <title>Phosphoproteome analysis of fission yeast.</title>
        <authorList>
            <person name="Wilson-Grady J.T."/>
            <person name="Villen J."/>
            <person name="Gygi S.P."/>
        </authorList>
    </citation>
    <scope>PHOSPHORYLATION [LARGE SCALE ANALYSIS] AT SER-413; SER-423; SER-428; SER-432; SER-433 AND SER-437</scope>
    <scope>IDENTIFICATION BY MASS SPECTROMETRY</scope>
</reference>
<proteinExistence type="evidence at protein level"/>
<feature type="chain" id="PRO_0000084550" description="Malic acid transport protein">
    <location>
        <begin position="1"/>
        <end position="438"/>
    </location>
</feature>
<feature type="transmembrane region" description="Helical" evidence="1">
    <location>
        <begin position="37"/>
        <end position="57"/>
    </location>
</feature>
<feature type="transmembrane region" description="Helical" evidence="1">
    <location>
        <begin position="65"/>
        <end position="85"/>
    </location>
</feature>
<feature type="transmembrane region" description="Helical" evidence="1">
    <location>
        <begin position="106"/>
        <end position="126"/>
    </location>
</feature>
<feature type="transmembrane region" description="Helical" evidence="1">
    <location>
        <begin position="140"/>
        <end position="160"/>
    </location>
</feature>
<feature type="transmembrane region" description="Helical" evidence="1">
    <location>
        <begin position="172"/>
        <end position="192"/>
    </location>
</feature>
<feature type="transmembrane region" description="Helical" evidence="1">
    <location>
        <begin position="205"/>
        <end position="225"/>
    </location>
</feature>
<feature type="transmembrane region" description="Helical" evidence="1">
    <location>
        <begin position="242"/>
        <end position="262"/>
    </location>
</feature>
<feature type="transmembrane region" description="Helical" evidence="1">
    <location>
        <begin position="288"/>
        <end position="308"/>
    </location>
</feature>
<feature type="transmembrane region" description="Helical" evidence="1">
    <location>
        <begin position="321"/>
        <end position="341"/>
    </location>
</feature>
<feature type="transmembrane region" description="Helical" evidence="1">
    <location>
        <begin position="353"/>
        <end position="373"/>
    </location>
</feature>
<feature type="region of interest" description="Disordered" evidence="2">
    <location>
        <begin position="390"/>
        <end position="438"/>
    </location>
</feature>
<feature type="modified residue" description="Phosphoserine" evidence="3">
    <location>
        <position position="413"/>
    </location>
</feature>
<feature type="modified residue" description="Phosphoserine" evidence="3">
    <location>
        <position position="423"/>
    </location>
</feature>
<feature type="modified residue" description="Phosphoserine" evidence="3">
    <location>
        <position position="428"/>
    </location>
</feature>
<feature type="modified residue" description="Phosphoserine" evidence="3">
    <location>
        <position position="432"/>
    </location>
</feature>
<feature type="modified residue" description="Phosphoserine" evidence="3">
    <location>
        <position position="433"/>
    </location>
</feature>
<feature type="modified residue" description="Phosphoserine" evidence="3">
    <location>
        <position position="437"/>
    </location>
</feature>
<gene>
    <name type="primary">mae1</name>
    <name type="ORF">SPAPB8E5.03</name>
</gene>
<organism>
    <name type="scientific">Schizosaccharomyces pombe (strain 972 / ATCC 24843)</name>
    <name type="common">Fission yeast</name>
    <dbReference type="NCBI Taxonomy" id="284812"/>
    <lineage>
        <taxon>Eukaryota</taxon>
        <taxon>Fungi</taxon>
        <taxon>Dikarya</taxon>
        <taxon>Ascomycota</taxon>
        <taxon>Taphrinomycotina</taxon>
        <taxon>Schizosaccharomycetes</taxon>
        <taxon>Schizosaccharomycetales</taxon>
        <taxon>Schizosaccharomycetaceae</taxon>
        <taxon>Schizosaccharomyces</taxon>
    </lineage>
</organism>
<protein>
    <recommendedName>
        <fullName>Malic acid transport protein</fullName>
    </recommendedName>
    <alternativeName>
        <fullName>Malate permease</fullName>
    </alternativeName>
</protein>
<name>MAE1_SCHPO</name>
<sequence>MGELKEILKQRYHELLDWNVKAPHVPLSQRLKHFTWSWFACTMATGGVGLIIGSFPFRFYGLNTIGKIVYILQIFLFSLFGSCMLFRFIKYPSTIKDSWNHHLEKLFIATCLLSISTFIDMLAIYAYPDTGEWMVWVIRILYYIYVAVSFIYCVMAFFTIFNNHVYTIETASPAWILPIFPPMICGVIAGAVNSTQPAHQLKNMVIFGILFQGLGFWVYLLLFAVNVLRFFTVGLAKPQDRPGMFMFVGPPAFSGLALINIARGAMGSRPYIFVGANSSEYLGFVSTFMAIFIWGLAAWCYCLAMVSFLAGFFTRAPLKFACGWFAFIFPNVGFVNCTIEIGKMIDSKAFQMFGHIIGVILCIQWILLMYLMVRAFLVNDLCYPGKDEDAHPPPKPNTGVLNPTFPPEKAPASLEKVDTHVTSTGGESDPPSSEHESV</sequence>
<comment type="function">
    <text>Permease for malate and other C4 dicarboxylic acids.</text>
</comment>
<comment type="subcellular location">
    <subcellularLocation>
        <location>Membrane</location>
        <topology>Multi-pass membrane protein</topology>
    </subcellularLocation>
</comment>
<comment type="similarity">
    <text evidence="4">Belongs to the tellurite-resistance/dicarboxylate transporter (TDT) family.</text>
</comment>
<dbReference type="EMBL" id="U21002">
    <property type="protein sequence ID" value="AAC49149.1"/>
    <property type="molecule type" value="Genomic_DNA"/>
</dbReference>
<dbReference type="EMBL" id="EF125015">
    <property type="protein sequence ID" value="ABL67724.1"/>
    <property type="molecule type" value="Genomic_DNA"/>
</dbReference>
<dbReference type="EMBL" id="CU329670">
    <property type="protein sequence ID" value="CAC37422.1"/>
    <property type="molecule type" value="Genomic_DNA"/>
</dbReference>
<dbReference type="PIR" id="S61876">
    <property type="entry name" value="S61876"/>
</dbReference>
<dbReference type="RefSeq" id="NP_594777.1">
    <property type="nucleotide sequence ID" value="NM_001020205.2"/>
</dbReference>
<dbReference type="SMR" id="P50537"/>
<dbReference type="BioGRID" id="279757">
    <property type="interactions" value="4"/>
</dbReference>
<dbReference type="STRING" id="284812.P50537"/>
<dbReference type="TCDB" id="2.A.16.2.1">
    <property type="family name" value="the telurite-resistance/dicarboxylate transporter (tdt) family"/>
</dbReference>
<dbReference type="iPTMnet" id="P50537"/>
<dbReference type="PaxDb" id="4896-SPAPB8E5.03.1"/>
<dbReference type="EnsemblFungi" id="SPAPB8E5.03.1">
    <property type="protein sequence ID" value="SPAPB8E5.03.1:pep"/>
    <property type="gene ID" value="SPAPB8E5.03"/>
</dbReference>
<dbReference type="GeneID" id="2543334"/>
<dbReference type="KEGG" id="spo:2543334"/>
<dbReference type="PomBase" id="SPAPB8E5.03">
    <property type="gene designation" value="mae1"/>
</dbReference>
<dbReference type="VEuPathDB" id="FungiDB:SPAPB8E5.03"/>
<dbReference type="eggNOG" id="ENOG502QV03">
    <property type="taxonomic scope" value="Eukaryota"/>
</dbReference>
<dbReference type="HOGENOM" id="CLU_030057_2_0_1"/>
<dbReference type="InParanoid" id="P50537"/>
<dbReference type="OMA" id="LPCREHR"/>
<dbReference type="PhylomeDB" id="P50537"/>
<dbReference type="PRO" id="PR:P50537"/>
<dbReference type="Proteomes" id="UP000002485">
    <property type="component" value="Chromosome I"/>
</dbReference>
<dbReference type="GO" id="GO:0005886">
    <property type="term" value="C:plasma membrane"/>
    <property type="evidence" value="ECO:0000305"/>
    <property type="project" value="PomBase"/>
</dbReference>
<dbReference type="GO" id="GO:0015140">
    <property type="term" value="F:malate transmembrane transporter activity"/>
    <property type="evidence" value="ECO:0000315"/>
    <property type="project" value="PomBase"/>
</dbReference>
<dbReference type="GO" id="GO:0015366">
    <property type="term" value="F:malate:proton symporter activity"/>
    <property type="evidence" value="ECO:0000314"/>
    <property type="project" value="PomBase"/>
</dbReference>
<dbReference type="GO" id="GO:1901239">
    <property type="term" value="F:malonate(1-) transmembrane transporter activity"/>
    <property type="evidence" value="ECO:0000315"/>
    <property type="project" value="PomBase"/>
</dbReference>
<dbReference type="GO" id="GO:0015141">
    <property type="term" value="F:succinate transmembrane transporter activity"/>
    <property type="evidence" value="ECO:0000315"/>
    <property type="project" value="PomBase"/>
</dbReference>
<dbReference type="GO" id="GO:0097434">
    <property type="term" value="F:succinate:proton symporter activity"/>
    <property type="evidence" value="ECO:0000314"/>
    <property type="project" value="PomBase"/>
</dbReference>
<dbReference type="GO" id="GO:0022857">
    <property type="term" value="F:transmembrane transporter activity"/>
    <property type="evidence" value="ECO:0000318"/>
    <property type="project" value="GO_Central"/>
</dbReference>
<dbReference type="GO" id="GO:0098714">
    <property type="term" value="P:malate import across plasma membrane"/>
    <property type="evidence" value="ECO:0000314"/>
    <property type="project" value="PomBase"/>
</dbReference>
<dbReference type="GO" id="GO:0098715">
    <property type="term" value="P:malonic acid import across plasma membrane"/>
    <property type="evidence" value="ECO:0000315"/>
    <property type="project" value="PomBase"/>
</dbReference>
<dbReference type="GO" id="GO:0098720">
    <property type="term" value="P:succinate import across plasma membrane"/>
    <property type="evidence" value="ECO:0000315"/>
    <property type="project" value="PomBase"/>
</dbReference>
<dbReference type="CDD" id="cd09317">
    <property type="entry name" value="TDT_Mae1_like"/>
    <property type="match status" value="1"/>
</dbReference>
<dbReference type="FunFam" id="1.50.10.150:FF:000004">
    <property type="entry name" value="Malic acid transporter"/>
    <property type="match status" value="1"/>
</dbReference>
<dbReference type="Gene3D" id="1.50.10.150">
    <property type="entry name" value="Voltage-dependent anion channel"/>
    <property type="match status" value="1"/>
</dbReference>
<dbReference type="InterPro" id="IPR030185">
    <property type="entry name" value="Mae1"/>
</dbReference>
<dbReference type="InterPro" id="IPR004695">
    <property type="entry name" value="SLAC1/Mae1/Ssu1/TehA"/>
</dbReference>
<dbReference type="InterPro" id="IPR011552">
    <property type="entry name" value="TehA/Mae1"/>
</dbReference>
<dbReference type="InterPro" id="IPR038665">
    <property type="entry name" value="Voltage-dep_anion_channel_sf"/>
</dbReference>
<dbReference type="NCBIfam" id="TIGR00816">
    <property type="entry name" value="tdt"/>
    <property type="match status" value="1"/>
</dbReference>
<dbReference type="PANTHER" id="PTHR31162:SF0">
    <property type="entry name" value="MALIC ACID TRANSPORT PROTEIN"/>
    <property type="match status" value="1"/>
</dbReference>
<dbReference type="PANTHER" id="PTHR31162">
    <property type="entry name" value="MALIC ACID TRANSPORT PROTEIN-RELATED"/>
    <property type="match status" value="1"/>
</dbReference>
<dbReference type="Pfam" id="PF03595">
    <property type="entry name" value="SLAC1"/>
    <property type="match status" value="1"/>
</dbReference>
<accession>P50537</accession>
<accession>A1EGU0</accession>
<evidence type="ECO:0000255" key="1"/>
<evidence type="ECO:0000256" key="2">
    <source>
        <dbReference type="SAM" id="MobiDB-lite"/>
    </source>
</evidence>
<evidence type="ECO:0000269" key="3">
    <source>
    </source>
</evidence>
<evidence type="ECO:0000305" key="4"/>